<protein>
    <recommendedName>
        <fullName>Putative uncharacterized protein DDB_G0283353</fullName>
    </recommendedName>
</protein>
<feature type="chain" id="PRO_0000351254" description="Putative uncharacterized protein DDB_G0283353">
    <location>
        <begin position="1"/>
        <end position="30"/>
    </location>
</feature>
<gene>
    <name type="ORF">DDB_G0283353</name>
</gene>
<proteinExistence type="predicted"/>
<keyword id="KW-1185">Reference proteome</keyword>
<dbReference type="EMBL" id="AAFI02000054">
    <property type="protein sequence ID" value="EAL65753.2"/>
    <property type="molecule type" value="Genomic_DNA"/>
</dbReference>
<dbReference type="RefSeq" id="XP_639108.2">
    <property type="nucleotide sequence ID" value="XM_634016.2"/>
</dbReference>
<dbReference type="PaxDb" id="44689-DDB0302626"/>
<dbReference type="EnsemblProtists" id="EAL65753">
    <property type="protein sequence ID" value="EAL65753"/>
    <property type="gene ID" value="DDB_G0283353"/>
</dbReference>
<dbReference type="GeneID" id="8624041"/>
<dbReference type="KEGG" id="ddi:DDB_G0283353"/>
<dbReference type="dictyBase" id="DDB_G0283353"/>
<dbReference type="HOGENOM" id="CLU_3407162_0_0_1"/>
<dbReference type="InParanoid" id="Q54R75"/>
<dbReference type="PRO" id="PR:Q54R75"/>
<dbReference type="Proteomes" id="UP000002195">
    <property type="component" value="Chromosome 4"/>
</dbReference>
<name>Y5463_DICDI</name>
<sequence>MKFNNAGAQGRDRGYIYSEPEFGRTRQVFY</sequence>
<accession>Q54R75</accession>
<reference key="1">
    <citation type="journal article" date="2005" name="Nature">
        <title>The genome of the social amoeba Dictyostelium discoideum.</title>
        <authorList>
            <person name="Eichinger L."/>
            <person name="Pachebat J.A."/>
            <person name="Gloeckner G."/>
            <person name="Rajandream M.A."/>
            <person name="Sucgang R."/>
            <person name="Berriman M."/>
            <person name="Song J."/>
            <person name="Olsen R."/>
            <person name="Szafranski K."/>
            <person name="Xu Q."/>
            <person name="Tunggal B."/>
            <person name="Kummerfeld S."/>
            <person name="Madera M."/>
            <person name="Konfortov B.A."/>
            <person name="Rivero F."/>
            <person name="Bankier A.T."/>
            <person name="Lehmann R."/>
            <person name="Hamlin N."/>
            <person name="Davies R."/>
            <person name="Gaudet P."/>
            <person name="Fey P."/>
            <person name="Pilcher K."/>
            <person name="Chen G."/>
            <person name="Saunders D."/>
            <person name="Sodergren E.J."/>
            <person name="Davis P."/>
            <person name="Kerhornou A."/>
            <person name="Nie X."/>
            <person name="Hall N."/>
            <person name="Anjard C."/>
            <person name="Hemphill L."/>
            <person name="Bason N."/>
            <person name="Farbrother P."/>
            <person name="Desany B."/>
            <person name="Just E."/>
            <person name="Morio T."/>
            <person name="Rost R."/>
            <person name="Churcher C.M."/>
            <person name="Cooper J."/>
            <person name="Haydock S."/>
            <person name="van Driessche N."/>
            <person name="Cronin A."/>
            <person name="Goodhead I."/>
            <person name="Muzny D.M."/>
            <person name="Mourier T."/>
            <person name="Pain A."/>
            <person name="Lu M."/>
            <person name="Harper D."/>
            <person name="Lindsay R."/>
            <person name="Hauser H."/>
            <person name="James K.D."/>
            <person name="Quiles M."/>
            <person name="Madan Babu M."/>
            <person name="Saito T."/>
            <person name="Buchrieser C."/>
            <person name="Wardroper A."/>
            <person name="Felder M."/>
            <person name="Thangavelu M."/>
            <person name="Johnson D."/>
            <person name="Knights A."/>
            <person name="Loulseged H."/>
            <person name="Mungall K.L."/>
            <person name="Oliver K."/>
            <person name="Price C."/>
            <person name="Quail M.A."/>
            <person name="Urushihara H."/>
            <person name="Hernandez J."/>
            <person name="Rabbinowitsch E."/>
            <person name="Steffen D."/>
            <person name="Sanders M."/>
            <person name="Ma J."/>
            <person name="Kohara Y."/>
            <person name="Sharp S."/>
            <person name="Simmonds M.N."/>
            <person name="Spiegler S."/>
            <person name="Tivey A."/>
            <person name="Sugano S."/>
            <person name="White B."/>
            <person name="Walker D."/>
            <person name="Woodward J.R."/>
            <person name="Winckler T."/>
            <person name="Tanaka Y."/>
            <person name="Shaulsky G."/>
            <person name="Schleicher M."/>
            <person name="Weinstock G.M."/>
            <person name="Rosenthal A."/>
            <person name="Cox E.C."/>
            <person name="Chisholm R.L."/>
            <person name="Gibbs R.A."/>
            <person name="Loomis W.F."/>
            <person name="Platzer M."/>
            <person name="Kay R.R."/>
            <person name="Williams J.G."/>
            <person name="Dear P.H."/>
            <person name="Noegel A.A."/>
            <person name="Barrell B.G."/>
            <person name="Kuspa A."/>
        </authorList>
    </citation>
    <scope>NUCLEOTIDE SEQUENCE [LARGE SCALE GENOMIC DNA]</scope>
    <source>
        <strain>AX4</strain>
    </source>
</reference>
<organism>
    <name type="scientific">Dictyostelium discoideum</name>
    <name type="common">Social amoeba</name>
    <dbReference type="NCBI Taxonomy" id="44689"/>
    <lineage>
        <taxon>Eukaryota</taxon>
        <taxon>Amoebozoa</taxon>
        <taxon>Evosea</taxon>
        <taxon>Eumycetozoa</taxon>
        <taxon>Dictyostelia</taxon>
        <taxon>Dictyosteliales</taxon>
        <taxon>Dictyosteliaceae</taxon>
        <taxon>Dictyostelium</taxon>
    </lineage>
</organism>